<keyword id="KW-0002">3D-structure</keyword>
<keyword id="KW-0966">Cell projection</keyword>
<keyword id="KW-0969">Cilium</keyword>
<keyword id="KW-0963">Cytoplasm</keyword>
<keyword id="KW-0206">Cytoskeleton</keyword>
<keyword id="KW-0282">Flagellum</keyword>
<keyword id="KW-0597">Phosphoprotein</keyword>
<proteinExistence type="evidence at protein level"/>
<sequence>MVQAKAQQQLYTHAAEPKAVQQRRAKYREDETTQTLPTANIMFDRRVVRGNTYAARILPADATQTQTKGPSPASTKKRTTRTLPPRTPEAVDGRRHIDIQTDVYLEELTDTVPEADTSTQTDAFLDRPPTPLFVPQKTGTDAITQIENGDLFDFDFEVEPILEVLVGKVLEQGLMEVLEEEELAAMRAHQEHFEQIRNAELVATQRMEAAERRKLEEKERRMQQERERVERERVVRQKVAASAFARGYLSGIVNTVFDRLVSSGYIYDPVMREVETAFMPWLKEQAIGYLARGVVARRVVDKLVEDAAAALAANRSTLADKAASTAATVDAWAERQAKMEAELQGKELEAVRRRPTFVLRELKPAVASADAVEAAAAELTAQAEEAANAKWEADKAEAAEKARAEAEAAAEEQKALLEELAATAAAEAEERGEEPPAEPPSLPDGVEPVDVEAEVAKAVEAVPKPPVKEVTDIDILSYMMDKGAITKDAIIQALAVHALGDKAYTNHPAFAEAEGA</sequence>
<feature type="chain" id="PRO_0000097493" description="Flagellar radial spoke protein 3">
    <location>
        <begin position="1"/>
        <end position="516"/>
    </location>
</feature>
<feature type="region of interest" description="Disordered" evidence="1">
    <location>
        <begin position="1"/>
        <end position="32"/>
    </location>
</feature>
<feature type="region of interest" description="Disordered" evidence="1">
    <location>
        <begin position="60"/>
        <end position="90"/>
    </location>
</feature>
<feature type="region of interest" description="Disordered" evidence="1">
    <location>
        <begin position="388"/>
        <end position="412"/>
    </location>
</feature>
<feature type="region of interest" description="Disordered" evidence="1">
    <location>
        <begin position="424"/>
        <end position="447"/>
    </location>
</feature>
<feature type="compositionally biased region" description="Polar residues" evidence="1">
    <location>
        <begin position="1"/>
        <end position="11"/>
    </location>
</feature>
<feature type="compositionally biased region" description="Polar residues" evidence="1">
    <location>
        <begin position="62"/>
        <end position="74"/>
    </location>
</feature>
<feature type="compositionally biased region" description="Basic and acidic residues" evidence="1">
    <location>
        <begin position="391"/>
        <end position="412"/>
    </location>
</feature>
<feature type="strand" evidence="7">
    <location>
        <begin position="140"/>
        <end position="143"/>
    </location>
</feature>
<feature type="strand" evidence="7">
    <location>
        <begin position="148"/>
        <end position="151"/>
    </location>
</feature>
<feature type="helix" evidence="7">
    <location>
        <begin position="154"/>
        <end position="260"/>
    </location>
</feature>
<feature type="helix" evidence="6">
    <location>
        <begin position="282"/>
        <end position="352"/>
    </location>
</feature>
<feature type="helix" evidence="6">
    <location>
        <begin position="354"/>
        <end position="359"/>
    </location>
</feature>
<feature type="helix" evidence="6">
    <location>
        <begin position="370"/>
        <end position="388"/>
    </location>
</feature>
<feature type="helix" evidence="6">
    <location>
        <begin position="472"/>
        <end position="482"/>
    </location>
</feature>
<feature type="helix" evidence="6">
    <location>
        <begin position="487"/>
        <end position="498"/>
    </location>
</feature>
<feature type="helix" evidence="7">
    <location>
        <begin position="500"/>
        <end position="502"/>
    </location>
</feature>
<feature type="turn" evidence="7">
    <location>
        <begin position="504"/>
        <end position="506"/>
    </location>
</feature>
<comment type="function">
    <text>Protein 3 may attach the radial spoke to the outer doublet microtubule or is required to form a stable spoke structure.</text>
</comment>
<comment type="function">
    <text>Flagellar radial spokes contribute to the regulation of dynein arm activity and thus the pattern of flagellar bending. They consist of a thin stalk, which is attached to the a subfiber of the outer doublet microtubule, and a bulbous head, which is attached to the stalk and appears to interact with the projections from the central pair of microtubules.</text>
</comment>
<comment type="subunit">
    <text evidence="2">Interacts with FAP91.</text>
</comment>
<comment type="subcellular location">
    <subcellularLocation>
        <location evidence="5">Cytoplasm</location>
        <location evidence="5">Cytoskeleton</location>
        <location evidence="5">Flagellum axoneme</location>
    </subcellularLocation>
    <text evidence="5">Radial spoke.</text>
</comment>
<comment type="PTM">
    <text>Protein 3 is one of the 5 radial spoke proteins that are phosphorylated.</text>
</comment>
<comment type="PTM">
    <text>Protein 3a might only differ from protein 3 in being unphosphorylated.</text>
</comment>
<comment type="similarity">
    <text evidence="4">Belongs to the flagellar radial spoke RSP3 family.</text>
</comment>
<dbReference type="EMBL" id="X14549">
    <property type="protein sequence ID" value="CAA32685.1"/>
    <property type="molecule type" value="Genomic_DNA"/>
</dbReference>
<dbReference type="PIR" id="S05962">
    <property type="entry name" value="A31270"/>
</dbReference>
<dbReference type="RefSeq" id="XP_001695406.1">
    <property type="nucleotide sequence ID" value="XM_001695354.1"/>
</dbReference>
<dbReference type="PDB" id="7JRJ">
    <property type="method" value="EM"/>
    <property type="resolution" value="3.03 A"/>
    <property type="chains" value="G=160-516"/>
</dbReference>
<dbReference type="PDB" id="7JTK">
    <property type="method" value="EM"/>
    <property type="resolution" value="3.20 A"/>
    <property type="chains" value="E/F=1-516"/>
</dbReference>
<dbReference type="PDB" id="7JTS">
    <property type="method" value="EM"/>
    <property type="resolution" value="6.10 A"/>
    <property type="chains" value="E/F=1-516"/>
</dbReference>
<dbReference type="PDBsum" id="7JRJ"/>
<dbReference type="PDBsum" id="7JTK"/>
<dbReference type="PDBsum" id="7JTS"/>
<dbReference type="EMDB" id="EMD-22446"/>
<dbReference type="SMR" id="P12759"/>
<dbReference type="PaxDb" id="3055-EDP01664"/>
<dbReference type="EnsemblPlants" id="PNW82729">
    <property type="protein sequence ID" value="PNW82729"/>
    <property type="gene ID" value="CHLRE_06g291700v5"/>
</dbReference>
<dbReference type="Gramene" id="PNW82729">
    <property type="protein sequence ID" value="PNW82729"/>
    <property type="gene ID" value="CHLRE_06g291700v5"/>
</dbReference>
<dbReference type="KEGG" id="cre:CHLRE_06g291700v5"/>
<dbReference type="eggNOG" id="ENOG502QQSZ">
    <property type="taxonomic scope" value="Eukaryota"/>
</dbReference>
<dbReference type="HOGENOM" id="CLU_036980_1_0_1"/>
<dbReference type="OMA" id="TANIMFD"/>
<dbReference type="OrthoDB" id="313308at2759"/>
<dbReference type="GO" id="GO:0031514">
    <property type="term" value="C:motile cilium"/>
    <property type="evidence" value="ECO:0007669"/>
    <property type="project" value="UniProtKB-KW"/>
</dbReference>
<dbReference type="GO" id="GO:0001534">
    <property type="term" value="C:radial spoke"/>
    <property type="evidence" value="ECO:0000314"/>
    <property type="project" value="UniProtKB"/>
</dbReference>
<dbReference type="GO" id="GO:2000155">
    <property type="term" value="P:positive regulation of cilium-dependent cell motility"/>
    <property type="evidence" value="ECO:0000314"/>
    <property type="project" value="UniProtKB"/>
</dbReference>
<dbReference type="InterPro" id="IPR009290">
    <property type="entry name" value="Radial_spoke_3"/>
</dbReference>
<dbReference type="PANTHER" id="PTHR21648">
    <property type="entry name" value="FLAGELLAR RADIAL SPOKE PROTEIN 3"/>
    <property type="match status" value="1"/>
</dbReference>
<dbReference type="PANTHER" id="PTHR21648:SF0">
    <property type="entry name" value="RADIAL SPOKE HEAD PROTEIN 3 HOMOLOG"/>
    <property type="match status" value="1"/>
</dbReference>
<dbReference type="Pfam" id="PF06098">
    <property type="entry name" value="Radial_spoke_3"/>
    <property type="match status" value="1"/>
</dbReference>
<organism>
    <name type="scientific">Chlamydomonas reinhardtii</name>
    <name type="common">Chlamydomonas smithii</name>
    <dbReference type="NCBI Taxonomy" id="3055"/>
    <lineage>
        <taxon>Eukaryota</taxon>
        <taxon>Viridiplantae</taxon>
        <taxon>Chlorophyta</taxon>
        <taxon>core chlorophytes</taxon>
        <taxon>Chlorophyceae</taxon>
        <taxon>CS clade</taxon>
        <taxon>Chlamydomonadales</taxon>
        <taxon>Chlamydomonadaceae</taxon>
        <taxon>Chlamydomonas</taxon>
    </lineage>
</organism>
<protein>
    <recommendedName>
        <fullName evidence="4">Flagellar radial spoke protein 3</fullName>
    </recommendedName>
</protein>
<name>RSP3_CHLRE</name>
<gene>
    <name evidence="3" type="primary">RSP3</name>
</gene>
<reference key="1">
    <citation type="journal article" date="1989" name="J. Cell Biol.">
        <title>Molecular cloning and sequence analysis of the Chlamydomonas gene coding for radial spoke protein 3: flagellar mutation pf-14 is an ochre allele.</title>
        <authorList>
            <person name="Williams B.D."/>
            <person name="Velleca M.A."/>
            <person name="Curry A.M."/>
            <person name="Rosenbaum J.L."/>
        </authorList>
    </citation>
    <scope>NUCLEOTIDE SEQUENCE [GENOMIC DNA]</scope>
    <source>
        <strain>21gr / CC-1690</strain>
    </source>
</reference>
<reference key="2">
    <citation type="journal article" date="2007" name="J. Cell Biol.">
        <title>A conserved CaM- and radial spoke associated complex mediates regulation of flagellar dynein activity.</title>
        <authorList>
            <person name="Dymek E.E."/>
            <person name="Smith E.F."/>
        </authorList>
    </citation>
    <scope>SUBCELLULAR LOCATION</scope>
    <scope>INTERACTION WITH FAP91</scope>
</reference>
<accession>P12759</accession>
<evidence type="ECO:0000256" key="1">
    <source>
        <dbReference type="SAM" id="MobiDB-lite"/>
    </source>
</evidence>
<evidence type="ECO:0000269" key="2">
    <source>
    </source>
</evidence>
<evidence type="ECO:0000303" key="3">
    <source>
    </source>
</evidence>
<evidence type="ECO:0000305" key="4"/>
<evidence type="ECO:0000305" key="5">
    <source>
    </source>
</evidence>
<evidence type="ECO:0007829" key="6">
    <source>
        <dbReference type="PDB" id="7JRJ"/>
    </source>
</evidence>
<evidence type="ECO:0007829" key="7">
    <source>
        <dbReference type="PDB" id="7JTK"/>
    </source>
</evidence>